<reference key="1">
    <citation type="journal article" date="2003" name="Nature">
        <title>Genome sequence of Bacillus cereus and comparative analysis with Bacillus anthracis.</title>
        <authorList>
            <person name="Ivanova N."/>
            <person name="Sorokin A."/>
            <person name="Anderson I."/>
            <person name="Galleron N."/>
            <person name="Candelon B."/>
            <person name="Kapatral V."/>
            <person name="Bhattacharyya A."/>
            <person name="Reznik G."/>
            <person name="Mikhailova N."/>
            <person name="Lapidus A."/>
            <person name="Chu L."/>
            <person name="Mazur M."/>
            <person name="Goltsman E."/>
            <person name="Larsen N."/>
            <person name="D'Souza M."/>
            <person name="Walunas T."/>
            <person name="Grechkin Y."/>
            <person name="Pusch G."/>
            <person name="Haselkorn R."/>
            <person name="Fonstein M."/>
            <person name="Ehrlich S.D."/>
            <person name="Overbeek R."/>
            <person name="Kyrpides N.C."/>
        </authorList>
    </citation>
    <scope>NUCLEOTIDE SEQUENCE [LARGE SCALE GENOMIC DNA]</scope>
    <source>
        <strain>ATCC 14579 / DSM 31 / CCUG 7414 / JCM 2152 / NBRC 15305 / NCIMB 9373 / NCTC 2599 / NRRL B-3711</strain>
    </source>
</reference>
<keyword id="KW-0012">Acyltransferase</keyword>
<keyword id="KW-1185">Reference proteome</keyword>
<keyword id="KW-0749">Sporulation</keyword>
<keyword id="KW-0808">Transferase</keyword>
<gene>
    <name evidence="1" type="primary">tgl</name>
    <name type="ordered locus">BC_3963</name>
</gene>
<feature type="chain" id="PRO_0000213723" description="Protein-glutamine gamma-glutamyltransferase">
    <location>
        <begin position="1"/>
        <end position="276"/>
    </location>
</feature>
<accession>Q819L3</accession>
<sequence>MIVIGRSIVHPYITNEYEPFAAEKQQILSIMAGNQEVYSFRTADELSFDLNLRVNIIISALELFQSGFQFRTFQQSFCNPQYWKRTSLGGFELLPNIPPSIAIQDIFKNGKLYGTECATAMIIIFYKALLSLYEEETFNRLFANLLLYTWDYDQDLRLITKNGGDLVPGDLVYFKNPQVNPATIEWQGENTIYLGNFFFYGHGVGVKTKEEIIYSLNERRVPYAFISAFLTDTITRIDSRIMSQYASSSTPQTSISFIPIRDDAIVATVGHTTTIY</sequence>
<comment type="function">
    <text evidence="1">Probably plays a role in the assembly of the spore coat proteins by catalyzing epsilon-(gamma-glutamyl)lysine cross-links.</text>
</comment>
<comment type="catalytic activity">
    <reaction evidence="1">
        <text>L-glutaminyl-[protein] + L-lysyl-[protein] = [protein]-L-lysyl-N(6)-5-L-glutamyl-[protein] + NH4(+)</text>
        <dbReference type="Rhea" id="RHEA:54816"/>
        <dbReference type="Rhea" id="RHEA-COMP:9752"/>
        <dbReference type="Rhea" id="RHEA-COMP:10207"/>
        <dbReference type="Rhea" id="RHEA-COMP:14005"/>
        <dbReference type="ChEBI" id="CHEBI:28938"/>
        <dbReference type="ChEBI" id="CHEBI:29969"/>
        <dbReference type="ChEBI" id="CHEBI:30011"/>
        <dbReference type="ChEBI" id="CHEBI:138370"/>
        <dbReference type="EC" id="2.3.2.13"/>
    </reaction>
</comment>
<comment type="similarity">
    <text evidence="1">Belongs to the bacillus TGase family.</text>
</comment>
<dbReference type="EC" id="2.3.2.13" evidence="1"/>
<dbReference type="EMBL" id="AE016877">
    <property type="protein sequence ID" value="AAP10883.1"/>
    <property type="molecule type" value="Genomic_DNA"/>
</dbReference>
<dbReference type="RefSeq" id="NP_833682.1">
    <property type="nucleotide sequence ID" value="NC_004722.1"/>
</dbReference>
<dbReference type="RefSeq" id="WP_000635337.1">
    <property type="nucleotide sequence ID" value="NZ_CP138336.1"/>
</dbReference>
<dbReference type="SMR" id="Q819L3"/>
<dbReference type="STRING" id="226900.BC_3963"/>
<dbReference type="KEGG" id="bce:BC3963"/>
<dbReference type="PATRIC" id="fig|226900.8.peg.4088"/>
<dbReference type="HOGENOM" id="CLU_088922_0_0_9"/>
<dbReference type="OrthoDB" id="1845399at2"/>
<dbReference type="Proteomes" id="UP000001417">
    <property type="component" value="Chromosome"/>
</dbReference>
<dbReference type="GO" id="GO:0003810">
    <property type="term" value="F:protein-glutamine gamma-glutamyltransferase activity"/>
    <property type="evidence" value="ECO:0007669"/>
    <property type="project" value="UniProtKB-UniRule"/>
</dbReference>
<dbReference type="GO" id="GO:0030435">
    <property type="term" value="P:sporulation resulting in formation of a cellular spore"/>
    <property type="evidence" value="ECO:0007669"/>
    <property type="project" value="UniProtKB-UniRule"/>
</dbReference>
<dbReference type="HAMAP" id="MF_00727">
    <property type="entry name" value="Tgl"/>
    <property type="match status" value="1"/>
</dbReference>
<dbReference type="InterPro" id="IPR020916">
    <property type="entry name" value="Gln_gamma-glutamylTfrase_bac"/>
</dbReference>
<dbReference type="NCBIfam" id="NF002869">
    <property type="entry name" value="PRK03187.1"/>
    <property type="match status" value="1"/>
</dbReference>
<dbReference type="Pfam" id="PF20085">
    <property type="entry name" value="TGL"/>
    <property type="match status" value="1"/>
</dbReference>
<proteinExistence type="inferred from homology"/>
<organism>
    <name type="scientific">Bacillus cereus (strain ATCC 14579 / DSM 31 / CCUG 7414 / JCM 2152 / NBRC 15305 / NCIMB 9373 / NCTC 2599 / NRRL B-3711)</name>
    <dbReference type="NCBI Taxonomy" id="226900"/>
    <lineage>
        <taxon>Bacteria</taxon>
        <taxon>Bacillati</taxon>
        <taxon>Bacillota</taxon>
        <taxon>Bacilli</taxon>
        <taxon>Bacillales</taxon>
        <taxon>Bacillaceae</taxon>
        <taxon>Bacillus</taxon>
        <taxon>Bacillus cereus group</taxon>
    </lineage>
</organism>
<protein>
    <recommendedName>
        <fullName evidence="1">Protein-glutamine gamma-glutamyltransferase</fullName>
        <ecNumber evidence="1">2.3.2.13</ecNumber>
    </recommendedName>
    <alternativeName>
        <fullName evidence="1">Transglutaminase</fullName>
        <shortName evidence="1">TGase</shortName>
    </alternativeName>
</protein>
<evidence type="ECO:0000255" key="1">
    <source>
        <dbReference type="HAMAP-Rule" id="MF_00727"/>
    </source>
</evidence>
<name>TGL_BACCR</name>